<sequence>MFNKFSKTFQYGRHTVKLETGEIARQASGSVLVSMDDTVVLVAVTVNKDVKPGQDFFPLTVDYYERTYAAGKIPGGFFKREGKQSEKEILTCRLIDRPIRPLFPAGFYHDVQVVATVMSLNPEVDADIPAMIGASAAMVLAGVPFMGPIGAARVGYANGEYILNPTKTELTTSQLDLVVAGTESAVLMVESEAQQLPEAVMLGAVVYGHEQMQAAIKAINELADEVNPVIFEWAPAAEDTELVAQVKALAEADVAAAFKIRQKQARSQALGEAWSKVKAALITEETETLRANHIKSLFKELEANVVRGQILAGEPRIDGRDTRTVRPIAIRTGVLPRAHGSVLFTRGETQALVSTTLGTKQDEQIIDALAGEYTDRFMLHYNFPPYSTGETGRMGPPKRREIGHGRLAKRALIAVLPKQEDFSYSMRVVSEITESNGSSSMASVCGGCLSLMNAGVPLSAHVAGIAMGLILEDNRFAVLTDILGDEDHLGDMDFKVAGTENGVTALQMDIKIQGITKEIMQVALDQAKEGRLHILGIMKSAIDAPQELSTHAPRLYTLRINPDKIRDVIGKGGSVIRALTEETGTSIDIAEDGLITIASVSAEGAEEAKRRIEEITAEVEIGKIYEGTVVKILDKNVGAIVQIMPGRDGLVHISQIANERIANVADHLQEGQQVRVKVLETDERGRIRLSIKAALADAPQV</sequence>
<accession>C1D8W8</accession>
<organism>
    <name type="scientific">Laribacter hongkongensis (strain HLHK9)</name>
    <dbReference type="NCBI Taxonomy" id="557598"/>
    <lineage>
        <taxon>Bacteria</taxon>
        <taxon>Pseudomonadati</taxon>
        <taxon>Pseudomonadota</taxon>
        <taxon>Betaproteobacteria</taxon>
        <taxon>Neisseriales</taxon>
        <taxon>Aquaspirillaceae</taxon>
        <taxon>Laribacter</taxon>
    </lineage>
</organism>
<keyword id="KW-0963">Cytoplasm</keyword>
<keyword id="KW-0460">Magnesium</keyword>
<keyword id="KW-0479">Metal-binding</keyword>
<keyword id="KW-0548">Nucleotidyltransferase</keyword>
<keyword id="KW-1185">Reference proteome</keyword>
<keyword id="KW-0694">RNA-binding</keyword>
<keyword id="KW-0808">Transferase</keyword>
<name>PNP_LARHH</name>
<feature type="chain" id="PRO_1000185740" description="Polyribonucleotide nucleotidyltransferase">
    <location>
        <begin position="1"/>
        <end position="701"/>
    </location>
</feature>
<feature type="domain" description="KH" evidence="1">
    <location>
        <begin position="553"/>
        <end position="612"/>
    </location>
</feature>
<feature type="domain" description="S1 motif" evidence="1">
    <location>
        <begin position="622"/>
        <end position="692"/>
    </location>
</feature>
<feature type="binding site" evidence="1">
    <location>
        <position position="487"/>
    </location>
    <ligand>
        <name>Mg(2+)</name>
        <dbReference type="ChEBI" id="CHEBI:18420"/>
    </ligand>
</feature>
<feature type="binding site" evidence="1">
    <location>
        <position position="493"/>
    </location>
    <ligand>
        <name>Mg(2+)</name>
        <dbReference type="ChEBI" id="CHEBI:18420"/>
    </ligand>
</feature>
<reference key="1">
    <citation type="journal article" date="2009" name="PLoS Genet.">
        <title>The complete genome and proteome of Laribacter hongkongensis reveal potential mechanisms for adaptations to different temperatures and habitats.</title>
        <authorList>
            <person name="Woo P.C.Y."/>
            <person name="Lau S.K.P."/>
            <person name="Tse H."/>
            <person name="Teng J.L.L."/>
            <person name="Curreem S.O."/>
            <person name="Tsang A.K.L."/>
            <person name="Fan R.Y.Y."/>
            <person name="Wong G.K.M."/>
            <person name="Huang Y."/>
            <person name="Loman N.J."/>
            <person name="Snyder L.A.S."/>
            <person name="Cai J.J."/>
            <person name="Huang J.-D."/>
            <person name="Mak W."/>
            <person name="Pallen M.J."/>
            <person name="Lok S."/>
            <person name="Yuen K.-Y."/>
        </authorList>
    </citation>
    <scope>NUCLEOTIDE SEQUENCE [LARGE SCALE GENOMIC DNA]</scope>
    <source>
        <strain>HLHK9</strain>
    </source>
</reference>
<comment type="function">
    <text evidence="1">Involved in mRNA degradation. Catalyzes the phosphorolysis of single-stranded polyribonucleotides processively in the 3'- to 5'-direction.</text>
</comment>
<comment type="catalytic activity">
    <reaction evidence="1">
        <text>RNA(n+1) + phosphate = RNA(n) + a ribonucleoside 5'-diphosphate</text>
        <dbReference type="Rhea" id="RHEA:22096"/>
        <dbReference type="Rhea" id="RHEA-COMP:14527"/>
        <dbReference type="Rhea" id="RHEA-COMP:17342"/>
        <dbReference type="ChEBI" id="CHEBI:43474"/>
        <dbReference type="ChEBI" id="CHEBI:57930"/>
        <dbReference type="ChEBI" id="CHEBI:140395"/>
        <dbReference type="EC" id="2.7.7.8"/>
    </reaction>
</comment>
<comment type="cofactor">
    <cofactor evidence="1">
        <name>Mg(2+)</name>
        <dbReference type="ChEBI" id="CHEBI:18420"/>
    </cofactor>
</comment>
<comment type="subcellular location">
    <subcellularLocation>
        <location evidence="1">Cytoplasm</location>
    </subcellularLocation>
</comment>
<comment type="similarity">
    <text evidence="1">Belongs to the polyribonucleotide nucleotidyltransferase family.</text>
</comment>
<dbReference type="EC" id="2.7.7.8" evidence="1"/>
<dbReference type="EMBL" id="CP001154">
    <property type="protein sequence ID" value="ACO74908.1"/>
    <property type="molecule type" value="Genomic_DNA"/>
</dbReference>
<dbReference type="RefSeq" id="WP_012697394.1">
    <property type="nucleotide sequence ID" value="NC_012559.1"/>
</dbReference>
<dbReference type="SMR" id="C1D8W8"/>
<dbReference type="STRING" id="557598.LHK_01924"/>
<dbReference type="GeneID" id="75108702"/>
<dbReference type="KEGG" id="lhk:LHK_01924"/>
<dbReference type="eggNOG" id="COG1185">
    <property type="taxonomic scope" value="Bacteria"/>
</dbReference>
<dbReference type="HOGENOM" id="CLU_004217_2_2_4"/>
<dbReference type="Proteomes" id="UP000002010">
    <property type="component" value="Chromosome"/>
</dbReference>
<dbReference type="GO" id="GO:0005829">
    <property type="term" value="C:cytosol"/>
    <property type="evidence" value="ECO:0007669"/>
    <property type="project" value="TreeGrafter"/>
</dbReference>
<dbReference type="GO" id="GO:0000175">
    <property type="term" value="F:3'-5'-RNA exonuclease activity"/>
    <property type="evidence" value="ECO:0007669"/>
    <property type="project" value="TreeGrafter"/>
</dbReference>
<dbReference type="GO" id="GO:0000287">
    <property type="term" value="F:magnesium ion binding"/>
    <property type="evidence" value="ECO:0007669"/>
    <property type="project" value="UniProtKB-UniRule"/>
</dbReference>
<dbReference type="GO" id="GO:0004654">
    <property type="term" value="F:polyribonucleotide nucleotidyltransferase activity"/>
    <property type="evidence" value="ECO:0007669"/>
    <property type="project" value="UniProtKB-UniRule"/>
</dbReference>
<dbReference type="GO" id="GO:0003723">
    <property type="term" value="F:RNA binding"/>
    <property type="evidence" value="ECO:0007669"/>
    <property type="project" value="UniProtKB-UniRule"/>
</dbReference>
<dbReference type="GO" id="GO:0006402">
    <property type="term" value="P:mRNA catabolic process"/>
    <property type="evidence" value="ECO:0007669"/>
    <property type="project" value="UniProtKB-UniRule"/>
</dbReference>
<dbReference type="GO" id="GO:0006396">
    <property type="term" value="P:RNA processing"/>
    <property type="evidence" value="ECO:0007669"/>
    <property type="project" value="InterPro"/>
</dbReference>
<dbReference type="CDD" id="cd02393">
    <property type="entry name" value="KH-I_PNPase"/>
    <property type="match status" value="1"/>
</dbReference>
<dbReference type="CDD" id="cd11363">
    <property type="entry name" value="RNase_PH_PNPase_1"/>
    <property type="match status" value="1"/>
</dbReference>
<dbReference type="CDD" id="cd11364">
    <property type="entry name" value="RNase_PH_PNPase_2"/>
    <property type="match status" value="1"/>
</dbReference>
<dbReference type="CDD" id="cd04472">
    <property type="entry name" value="S1_PNPase"/>
    <property type="match status" value="1"/>
</dbReference>
<dbReference type="FunFam" id="3.30.1370.10:FF:000001">
    <property type="entry name" value="Polyribonucleotide nucleotidyltransferase"/>
    <property type="match status" value="1"/>
</dbReference>
<dbReference type="FunFam" id="3.30.230.70:FF:000001">
    <property type="entry name" value="Polyribonucleotide nucleotidyltransferase"/>
    <property type="match status" value="1"/>
</dbReference>
<dbReference type="FunFam" id="3.30.230.70:FF:000002">
    <property type="entry name" value="Polyribonucleotide nucleotidyltransferase"/>
    <property type="match status" value="1"/>
</dbReference>
<dbReference type="Gene3D" id="3.30.230.70">
    <property type="entry name" value="GHMP Kinase, N-terminal domain"/>
    <property type="match status" value="2"/>
</dbReference>
<dbReference type="Gene3D" id="3.30.1370.10">
    <property type="entry name" value="K Homology domain, type 1"/>
    <property type="match status" value="1"/>
</dbReference>
<dbReference type="Gene3D" id="2.40.50.140">
    <property type="entry name" value="Nucleic acid-binding proteins"/>
    <property type="match status" value="1"/>
</dbReference>
<dbReference type="HAMAP" id="MF_01595">
    <property type="entry name" value="PNPase"/>
    <property type="match status" value="1"/>
</dbReference>
<dbReference type="InterPro" id="IPR001247">
    <property type="entry name" value="ExoRNase_PH_dom1"/>
</dbReference>
<dbReference type="InterPro" id="IPR015847">
    <property type="entry name" value="ExoRNase_PH_dom2"/>
</dbReference>
<dbReference type="InterPro" id="IPR036345">
    <property type="entry name" value="ExoRNase_PH_dom2_sf"/>
</dbReference>
<dbReference type="InterPro" id="IPR004087">
    <property type="entry name" value="KH_dom"/>
</dbReference>
<dbReference type="InterPro" id="IPR004088">
    <property type="entry name" value="KH_dom_type_1"/>
</dbReference>
<dbReference type="InterPro" id="IPR036612">
    <property type="entry name" value="KH_dom_type_1_sf"/>
</dbReference>
<dbReference type="InterPro" id="IPR012340">
    <property type="entry name" value="NA-bd_OB-fold"/>
</dbReference>
<dbReference type="InterPro" id="IPR012162">
    <property type="entry name" value="PNPase"/>
</dbReference>
<dbReference type="InterPro" id="IPR027408">
    <property type="entry name" value="PNPase/RNase_PH_dom_sf"/>
</dbReference>
<dbReference type="InterPro" id="IPR015848">
    <property type="entry name" value="PNPase_PH_RNA-bd_bac/org-type"/>
</dbReference>
<dbReference type="InterPro" id="IPR020568">
    <property type="entry name" value="Ribosomal_Su5_D2-typ_SF"/>
</dbReference>
<dbReference type="InterPro" id="IPR003029">
    <property type="entry name" value="S1_domain"/>
</dbReference>
<dbReference type="NCBIfam" id="TIGR03591">
    <property type="entry name" value="polynuc_phos"/>
    <property type="match status" value="1"/>
</dbReference>
<dbReference type="NCBIfam" id="NF008805">
    <property type="entry name" value="PRK11824.1"/>
    <property type="match status" value="1"/>
</dbReference>
<dbReference type="PANTHER" id="PTHR11252">
    <property type="entry name" value="POLYRIBONUCLEOTIDE NUCLEOTIDYLTRANSFERASE"/>
    <property type="match status" value="1"/>
</dbReference>
<dbReference type="PANTHER" id="PTHR11252:SF0">
    <property type="entry name" value="POLYRIBONUCLEOTIDE NUCLEOTIDYLTRANSFERASE 1, MITOCHONDRIAL"/>
    <property type="match status" value="1"/>
</dbReference>
<dbReference type="Pfam" id="PF00013">
    <property type="entry name" value="KH_1"/>
    <property type="match status" value="1"/>
</dbReference>
<dbReference type="Pfam" id="PF03726">
    <property type="entry name" value="PNPase"/>
    <property type="match status" value="1"/>
</dbReference>
<dbReference type="Pfam" id="PF01138">
    <property type="entry name" value="RNase_PH"/>
    <property type="match status" value="2"/>
</dbReference>
<dbReference type="Pfam" id="PF03725">
    <property type="entry name" value="RNase_PH_C"/>
    <property type="match status" value="2"/>
</dbReference>
<dbReference type="Pfam" id="PF00575">
    <property type="entry name" value="S1"/>
    <property type="match status" value="1"/>
</dbReference>
<dbReference type="PIRSF" id="PIRSF005499">
    <property type="entry name" value="PNPase"/>
    <property type="match status" value="1"/>
</dbReference>
<dbReference type="SMART" id="SM00322">
    <property type="entry name" value="KH"/>
    <property type="match status" value="1"/>
</dbReference>
<dbReference type="SMART" id="SM00316">
    <property type="entry name" value="S1"/>
    <property type="match status" value="1"/>
</dbReference>
<dbReference type="SUPFAM" id="SSF54791">
    <property type="entry name" value="Eukaryotic type KH-domain (KH-domain type I)"/>
    <property type="match status" value="1"/>
</dbReference>
<dbReference type="SUPFAM" id="SSF50249">
    <property type="entry name" value="Nucleic acid-binding proteins"/>
    <property type="match status" value="1"/>
</dbReference>
<dbReference type="SUPFAM" id="SSF55666">
    <property type="entry name" value="Ribonuclease PH domain 2-like"/>
    <property type="match status" value="2"/>
</dbReference>
<dbReference type="SUPFAM" id="SSF54211">
    <property type="entry name" value="Ribosomal protein S5 domain 2-like"/>
    <property type="match status" value="2"/>
</dbReference>
<dbReference type="PROSITE" id="PS50084">
    <property type="entry name" value="KH_TYPE_1"/>
    <property type="match status" value="1"/>
</dbReference>
<dbReference type="PROSITE" id="PS50126">
    <property type="entry name" value="S1"/>
    <property type="match status" value="1"/>
</dbReference>
<protein>
    <recommendedName>
        <fullName evidence="1">Polyribonucleotide nucleotidyltransferase</fullName>
        <ecNumber evidence="1">2.7.7.8</ecNumber>
    </recommendedName>
    <alternativeName>
        <fullName evidence="1">Polynucleotide phosphorylase</fullName>
        <shortName evidence="1">PNPase</shortName>
    </alternativeName>
</protein>
<evidence type="ECO:0000255" key="1">
    <source>
        <dbReference type="HAMAP-Rule" id="MF_01595"/>
    </source>
</evidence>
<proteinExistence type="inferred from homology"/>
<gene>
    <name evidence="1" type="primary">pnp</name>
    <name type="ordered locus">LHK_01924</name>
</gene>